<protein>
    <recommendedName>
        <fullName evidence="1">Chaperone protein DnaJ</fullName>
    </recommendedName>
</protein>
<organism>
    <name type="scientific">Rhodospirillum centenum (strain ATCC 51521 / SW)</name>
    <dbReference type="NCBI Taxonomy" id="414684"/>
    <lineage>
        <taxon>Bacteria</taxon>
        <taxon>Pseudomonadati</taxon>
        <taxon>Pseudomonadota</taxon>
        <taxon>Alphaproteobacteria</taxon>
        <taxon>Rhodospirillales</taxon>
        <taxon>Rhodospirillaceae</taxon>
        <taxon>Rhodospirillum</taxon>
    </lineage>
</organism>
<evidence type="ECO:0000255" key="1">
    <source>
        <dbReference type="HAMAP-Rule" id="MF_01152"/>
    </source>
</evidence>
<name>DNAJ_RHOCS</name>
<gene>
    <name evidence="1" type="primary">dnaJ</name>
    <name type="ordered locus">RC1_2859</name>
</gene>
<sequence length="379" mass="40903">MSKRDYYEVLGVQKGASADDLKKAYRKLAMQYHPDRNQGDKAAEQKFKEISEAYDVLKDDQKRAAYDRFGHAAFENGRGGPGAGAAGFDFNFGSGFADIFDEMFGEFMGRGRAGQTSNRGADLRYNLEITLEDAFKGATTTVRVPTSVACESCNGTGAEGGSTPIACPTCNGHGKVRAQQGFFTIERTCPACHGVGRVIKDPCRTCGGQGRVRKEKTLSVNIPAGVEDGTRIRLAGEGEAGLRGGPPGDLYIFLAIAPHRFFQRDGANLQCRVPIPMTTAALGGSVEVPTIDGSRAKIAIPAGTQTGHQFRLKGKGMSVLRSPARGDLYIQVVVETPVNLTKKQQELLREFEKAGQDGLHPESEGFFAKVKELWADLKD</sequence>
<keyword id="KW-0143">Chaperone</keyword>
<keyword id="KW-0963">Cytoplasm</keyword>
<keyword id="KW-0235">DNA replication</keyword>
<keyword id="KW-0479">Metal-binding</keyword>
<keyword id="KW-1185">Reference proteome</keyword>
<keyword id="KW-0677">Repeat</keyword>
<keyword id="KW-0346">Stress response</keyword>
<keyword id="KW-0862">Zinc</keyword>
<keyword id="KW-0863">Zinc-finger</keyword>
<comment type="function">
    <text evidence="1">Participates actively in the response to hyperosmotic and heat shock by preventing the aggregation of stress-denatured proteins and by disaggregating proteins, also in an autonomous, DnaK-independent fashion. Unfolded proteins bind initially to DnaJ; upon interaction with the DnaJ-bound protein, DnaK hydrolyzes its bound ATP, resulting in the formation of a stable complex. GrpE releases ADP from DnaK; ATP binding to DnaK triggers the release of the substrate protein, thus completing the reaction cycle. Several rounds of ATP-dependent interactions between DnaJ, DnaK and GrpE are required for fully efficient folding. Also involved, together with DnaK and GrpE, in the DNA replication of plasmids through activation of initiation proteins.</text>
</comment>
<comment type="cofactor">
    <cofactor evidence="1">
        <name>Zn(2+)</name>
        <dbReference type="ChEBI" id="CHEBI:29105"/>
    </cofactor>
    <text evidence="1">Binds 2 Zn(2+) ions per monomer.</text>
</comment>
<comment type="subunit">
    <text evidence="1">Homodimer.</text>
</comment>
<comment type="subcellular location">
    <subcellularLocation>
        <location evidence="1">Cytoplasm</location>
    </subcellularLocation>
</comment>
<comment type="domain">
    <text evidence="1">The J domain is necessary and sufficient to stimulate DnaK ATPase activity. Zinc center 1 plays an important role in the autonomous, DnaK-independent chaperone activity of DnaJ. Zinc center 2 is essential for interaction with DnaK and for DnaJ activity.</text>
</comment>
<comment type="similarity">
    <text evidence="1">Belongs to the DnaJ family.</text>
</comment>
<proteinExistence type="inferred from homology"/>
<accession>B6IVA5</accession>
<reference key="1">
    <citation type="submission" date="2007-03" db="EMBL/GenBank/DDBJ databases">
        <title>Genome sequence of Rhodospirillum centenum.</title>
        <authorList>
            <person name="Touchman J.W."/>
            <person name="Bauer C."/>
            <person name="Blankenship R.E."/>
        </authorList>
    </citation>
    <scope>NUCLEOTIDE SEQUENCE [LARGE SCALE GENOMIC DNA]</scope>
    <source>
        <strain>ATCC 51521 / SW</strain>
    </source>
</reference>
<feature type="chain" id="PRO_1000137717" description="Chaperone protein DnaJ">
    <location>
        <begin position="1"/>
        <end position="379"/>
    </location>
</feature>
<feature type="domain" description="J" evidence="1">
    <location>
        <begin position="5"/>
        <end position="70"/>
    </location>
</feature>
<feature type="repeat" description="CXXCXGXG motif">
    <location>
        <begin position="150"/>
        <end position="157"/>
    </location>
</feature>
<feature type="repeat" description="CXXCXGXG motif">
    <location>
        <begin position="167"/>
        <end position="174"/>
    </location>
</feature>
<feature type="repeat" description="CXXCXGXG motif">
    <location>
        <begin position="189"/>
        <end position="196"/>
    </location>
</feature>
<feature type="repeat" description="CXXCXGXG motif">
    <location>
        <begin position="203"/>
        <end position="210"/>
    </location>
</feature>
<feature type="zinc finger region" description="CR-type" evidence="1">
    <location>
        <begin position="137"/>
        <end position="215"/>
    </location>
</feature>
<feature type="binding site" evidence="1">
    <location>
        <position position="150"/>
    </location>
    <ligand>
        <name>Zn(2+)</name>
        <dbReference type="ChEBI" id="CHEBI:29105"/>
        <label>1</label>
    </ligand>
</feature>
<feature type="binding site" evidence="1">
    <location>
        <position position="153"/>
    </location>
    <ligand>
        <name>Zn(2+)</name>
        <dbReference type="ChEBI" id="CHEBI:29105"/>
        <label>1</label>
    </ligand>
</feature>
<feature type="binding site" evidence="1">
    <location>
        <position position="167"/>
    </location>
    <ligand>
        <name>Zn(2+)</name>
        <dbReference type="ChEBI" id="CHEBI:29105"/>
        <label>2</label>
    </ligand>
</feature>
<feature type="binding site" evidence="1">
    <location>
        <position position="170"/>
    </location>
    <ligand>
        <name>Zn(2+)</name>
        <dbReference type="ChEBI" id="CHEBI:29105"/>
        <label>2</label>
    </ligand>
</feature>
<feature type="binding site" evidence="1">
    <location>
        <position position="189"/>
    </location>
    <ligand>
        <name>Zn(2+)</name>
        <dbReference type="ChEBI" id="CHEBI:29105"/>
        <label>2</label>
    </ligand>
</feature>
<feature type="binding site" evidence="1">
    <location>
        <position position="192"/>
    </location>
    <ligand>
        <name>Zn(2+)</name>
        <dbReference type="ChEBI" id="CHEBI:29105"/>
        <label>2</label>
    </ligand>
</feature>
<feature type="binding site" evidence="1">
    <location>
        <position position="203"/>
    </location>
    <ligand>
        <name>Zn(2+)</name>
        <dbReference type="ChEBI" id="CHEBI:29105"/>
        <label>1</label>
    </ligand>
</feature>
<feature type="binding site" evidence="1">
    <location>
        <position position="206"/>
    </location>
    <ligand>
        <name>Zn(2+)</name>
        <dbReference type="ChEBI" id="CHEBI:29105"/>
        <label>1</label>
    </ligand>
</feature>
<dbReference type="EMBL" id="CP000613">
    <property type="protein sequence ID" value="ACJ00229.1"/>
    <property type="molecule type" value="Genomic_DNA"/>
</dbReference>
<dbReference type="RefSeq" id="WP_012568009.1">
    <property type="nucleotide sequence ID" value="NC_011420.2"/>
</dbReference>
<dbReference type="SMR" id="B6IVA5"/>
<dbReference type="STRING" id="414684.RC1_2859"/>
<dbReference type="KEGG" id="rce:RC1_2859"/>
<dbReference type="eggNOG" id="COG0484">
    <property type="taxonomic scope" value="Bacteria"/>
</dbReference>
<dbReference type="HOGENOM" id="CLU_017633_0_7_5"/>
<dbReference type="OrthoDB" id="9779889at2"/>
<dbReference type="Proteomes" id="UP000001591">
    <property type="component" value="Chromosome"/>
</dbReference>
<dbReference type="GO" id="GO:0005737">
    <property type="term" value="C:cytoplasm"/>
    <property type="evidence" value="ECO:0007669"/>
    <property type="project" value="UniProtKB-SubCell"/>
</dbReference>
<dbReference type="GO" id="GO:0005524">
    <property type="term" value="F:ATP binding"/>
    <property type="evidence" value="ECO:0007669"/>
    <property type="project" value="InterPro"/>
</dbReference>
<dbReference type="GO" id="GO:0031072">
    <property type="term" value="F:heat shock protein binding"/>
    <property type="evidence" value="ECO:0007669"/>
    <property type="project" value="InterPro"/>
</dbReference>
<dbReference type="GO" id="GO:0051082">
    <property type="term" value="F:unfolded protein binding"/>
    <property type="evidence" value="ECO:0007669"/>
    <property type="project" value="UniProtKB-UniRule"/>
</dbReference>
<dbReference type="GO" id="GO:0008270">
    <property type="term" value="F:zinc ion binding"/>
    <property type="evidence" value="ECO:0007669"/>
    <property type="project" value="UniProtKB-UniRule"/>
</dbReference>
<dbReference type="GO" id="GO:0051085">
    <property type="term" value="P:chaperone cofactor-dependent protein refolding"/>
    <property type="evidence" value="ECO:0007669"/>
    <property type="project" value="TreeGrafter"/>
</dbReference>
<dbReference type="GO" id="GO:0006260">
    <property type="term" value="P:DNA replication"/>
    <property type="evidence" value="ECO:0007669"/>
    <property type="project" value="UniProtKB-KW"/>
</dbReference>
<dbReference type="GO" id="GO:0042026">
    <property type="term" value="P:protein refolding"/>
    <property type="evidence" value="ECO:0007669"/>
    <property type="project" value="TreeGrafter"/>
</dbReference>
<dbReference type="GO" id="GO:0009408">
    <property type="term" value="P:response to heat"/>
    <property type="evidence" value="ECO:0007669"/>
    <property type="project" value="InterPro"/>
</dbReference>
<dbReference type="CDD" id="cd06257">
    <property type="entry name" value="DnaJ"/>
    <property type="match status" value="1"/>
</dbReference>
<dbReference type="CDD" id="cd10747">
    <property type="entry name" value="DnaJ_C"/>
    <property type="match status" value="1"/>
</dbReference>
<dbReference type="CDD" id="cd10719">
    <property type="entry name" value="DnaJ_zf"/>
    <property type="match status" value="1"/>
</dbReference>
<dbReference type="FunFam" id="1.10.287.110:FF:000031">
    <property type="entry name" value="Molecular chaperone DnaJ"/>
    <property type="match status" value="1"/>
</dbReference>
<dbReference type="FunFam" id="2.10.230.10:FF:000002">
    <property type="entry name" value="Molecular chaperone DnaJ"/>
    <property type="match status" value="1"/>
</dbReference>
<dbReference type="FunFam" id="2.60.260.20:FF:000004">
    <property type="entry name" value="Molecular chaperone DnaJ"/>
    <property type="match status" value="1"/>
</dbReference>
<dbReference type="FunFam" id="2.60.260.20:FF:000009">
    <property type="entry name" value="Putative Mitochondrial DnaJ chaperone"/>
    <property type="match status" value="1"/>
</dbReference>
<dbReference type="Gene3D" id="1.10.287.110">
    <property type="entry name" value="DnaJ domain"/>
    <property type="match status" value="1"/>
</dbReference>
<dbReference type="Gene3D" id="2.10.230.10">
    <property type="entry name" value="Heat shock protein DnaJ, cysteine-rich domain"/>
    <property type="match status" value="1"/>
</dbReference>
<dbReference type="Gene3D" id="2.60.260.20">
    <property type="entry name" value="Urease metallochaperone UreE, N-terminal domain"/>
    <property type="match status" value="2"/>
</dbReference>
<dbReference type="HAMAP" id="MF_01152">
    <property type="entry name" value="DnaJ"/>
    <property type="match status" value="1"/>
</dbReference>
<dbReference type="InterPro" id="IPR012724">
    <property type="entry name" value="DnaJ"/>
</dbReference>
<dbReference type="InterPro" id="IPR002939">
    <property type="entry name" value="DnaJ_C"/>
</dbReference>
<dbReference type="InterPro" id="IPR001623">
    <property type="entry name" value="DnaJ_domain"/>
</dbReference>
<dbReference type="InterPro" id="IPR018253">
    <property type="entry name" value="DnaJ_domain_CS"/>
</dbReference>
<dbReference type="InterPro" id="IPR008971">
    <property type="entry name" value="HSP40/DnaJ_pept-bd"/>
</dbReference>
<dbReference type="InterPro" id="IPR001305">
    <property type="entry name" value="HSP_DnaJ_Cys-rich_dom"/>
</dbReference>
<dbReference type="InterPro" id="IPR036410">
    <property type="entry name" value="HSP_DnaJ_Cys-rich_dom_sf"/>
</dbReference>
<dbReference type="InterPro" id="IPR036869">
    <property type="entry name" value="J_dom_sf"/>
</dbReference>
<dbReference type="NCBIfam" id="TIGR02349">
    <property type="entry name" value="DnaJ_bact"/>
    <property type="match status" value="1"/>
</dbReference>
<dbReference type="NCBIfam" id="NF008035">
    <property type="entry name" value="PRK10767.1"/>
    <property type="match status" value="1"/>
</dbReference>
<dbReference type="PANTHER" id="PTHR43096:SF48">
    <property type="entry name" value="CHAPERONE PROTEIN DNAJ"/>
    <property type="match status" value="1"/>
</dbReference>
<dbReference type="PANTHER" id="PTHR43096">
    <property type="entry name" value="DNAJ HOMOLOG 1, MITOCHONDRIAL-RELATED"/>
    <property type="match status" value="1"/>
</dbReference>
<dbReference type="Pfam" id="PF00226">
    <property type="entry name" value="DnaJ"/>
    <property type="match status" value="1"/>
</dbReference>
<dbReference type="Pfam" id="PF01556">
    <property type="entry name" value="DnaJ_C"/>
    <property type="match status" value="1"/>
</dbReference>
<dbReference type="Pfam" id="PF00684">
    <property type="entry name" value="DnaJ_CXXCXGXG"/>
    <property type="match status" value="1"/>
</dbReference>
<dbReference type="PRINTS" id="PR00625">
    <property type="entry name" value="JDOMAIN"/>
</dbReference>
<dbReference type="SMART" id="SM00271">
    <property type="entry name" value="DnaJ"/>
    <property type="match status" value="1"/>
</dbReference>
<dbReference type="SUPFAM" id="SSF46565">
    <property type="entry name" value="Chaperone J-domain"/>
    <property type="match status" value="1"/>
</dbReference>
<dbReference type="SUPFAM" id="SSF57938">
    <property type="entry name" value="DnaJ/Hsp40 cysteine-rich domain"/>
    <property type="match status" value="1"/>
</dbReference>
<dbReference type="SUPFAM" id="SSF49493">
    <property type="entry name" value="HSP40/DnaJ peptide-binding domain"/>
    <property type="match status" value="2"/>
</dbReference>
<dbReference type="PROSITE" id="PS00636">
    <property type="entry name" value="DNAJ_1"/>
    <property type="match status" value="1"/>
</dbReference>
<dbReference type="PROSITE" id="PS50076">
    <property type="entry name" value="DNAJ_2"/>
    <property type="match status" value="1"/>
</dbReference>
<dbReference type="PROSITE" id="PS51188">
    <property type="entry name" value="ZF_CR"/>
    <property type="match status" value="1"/>
</dbReference>